<keyword id="KW-0749">Sporulation</keyword>
<keyword id="KW-0800">Toxin</keyword>
<keyword id="KW-0843">Virulence</keyword>
<accession>Q45790</accession>
<protein>
    <recommendedName>
        <fullName>Type-1Ba cytolytic delta-endotoxin</fullName>
    </recommendedName>
</protein>
<proteinExistence type="evidence at transcript level"/>
<feature type="chain" id="PRO_0000174107" description="Type-1Ba cytolytic delta-endotoxin">
    <location>
        <begin position="1"/>
        <end position="265"/>
    </location>
</feature>
<dbReference type="EMBL" id="U37196">
    <property type="protein sequence ID" value="AAB03693.1"/>
    <property type="molecule type" value="Genomic_DNA"/>
</dbReference>
<dbReference type="SMR" id="Q45790"/>
<dbReference type="GO" id="GO:0005576">
    <property type="term" value="C:extracellular region"/>
    <property type="evidence" value="ECO:0007669"/>
    <property type="project" value="InterPro"/>
</dbReference>
<dbReference type="GO" id="GO:0090729">
    <property type="term" value="F:toxin activity"/>
    <property type="evidence" value="ECO:0007669"/>
    <property type="project" value="UniProtKB-KW"/>
</dbReference>
<dbReference type="GO" id="GO:0030435">
    <property type="term" value="P:sporulation resulting in formation of a cellular spore"/>
    <property type="evidence" value="ECO:0007669"/>
    <property type="project" value="UniProtKB-KW"/>
</dbReference>
<dbReference type="Gene3D" id="3.40.198.10">
    <property type="entry name" value="Delta-endotoxin CytB-like"/>
    <property type="match status" value="1"/>
</dbReference>
<dbReference type="InterPro" id="IPR035918">
    <property type="entry name" value="CytB_endotoxin-like_sf"/>
</dbReference>
<dbReference type="InterPro" id="IPR001615">
    <property type="entry name" value="Endotoxin_CytB"/>
</dbReference>
<dbReference type="Pfam" id="PF01338">
    <property type="entry name" value="Bac_thur_toxin"/>
    <property type="match status" value="1"/>
</dbReference>
<dbReference type="SUPFAM" id="SSF55676">
    <property type="entry name" value="CytB endotoxin-like"/>
    <property type="match status" value="1"/>
</dbReference>
<organism>
    <name type="scientific">Bacillus thuringiensis subsp. neoleoensis</name>
    <dbReference type="NCBI Taxonomy" id="43262"/>
    <lineage>
        <taxon>Bacteria</taxon>
        <taxon>Bacillati</taxon>
        <taxon>Bacillota</taxon>
        <taxon>Bacilli</taxon>
        <taxon>Bacillales</taxon>
        <taxon>Bacillaceae</taxon>
        <taxon>Bacillus</taxon>
        <taxon>Bacillus cereus group</taxon>
    </lineage>
</organism>
<reference key="1">
    <citation type="submission" date="1996-07" db="EMBL/GenBank/DDBJ databases">
        <authorList>
            <person name="Narva K.E."/>
            <person name="Payne J.M."/>
            <person name="Uyeda K.A."/>
            <person name="Stalder C.J."/>
            <person name="Michaels T.E."/>
        </authorList>
    </citation>
    <scope>NUCLEOTIDE SEQUENCE [GENOMIC DNA]</scope>
    <source>
        <strain>PS201T6</strain>
    </source>
</reference>
<comment type="function">
    <text evidence="1">Kills the larvae of dipteran insects by making pores in the epithelial cell membrane of the insect midgut.</text>
</comment>
<comment type="developmental stage">
    <text>The crystal protein is produced during sporulation and is accumulated both as an inclusion and as part of the spore coat.</text>
</comment>
<comment type="PTM">
    <text evidence="1">Active after proteolytic processing.</text>
</comment>
<comment type="similarity">
    <text evidence="2">Belongs to the cyt1/cyt2 endotoxin family.</text>
</comment>
<name>CT1BA_BACTW</name>
<evidence type="ECO:0000250" key="1"/>
<evidence type="ECO:0000305" key="2"/>
<sequence>MKESIYYNEENEIQISQGNCFPEELGHNPWRQPQSTARVIYLKVKDPIDTTQLLEITEIENPNYVLQAIQLAAAFQDALVPTETEFGEAIRFSMPKGLEVAKTIQPKGAVVAYTDQTLSQSNNQVSVMIDRVISVLKTVMGVALSGSIITQLTAAITDTFTNLNTQKDSAWVFWGKETSHQTNYTYNVMFAIQNETTGRVMMCVPIGFEIRVFTDKRTVLFLTTKDYANYSVNIQTLRFAQPLIDSRALSINDLSEALRSSKYLY</sequence>
<gene>
    <name type="primary">cyt1Ba1</name>
</gene>